<keyword id="KW-1185">Reference proteome</keyword>
<comment type="similarity">
    <text evidence="1">Belongs to the UPF0301 (AlgH) family.</text>
</comment>
<gene>
    <name type="ordered locus">FTT_0985</name>
</gene>
<evidence type="ECO:0000255" key="1">
    <source>
        <dbReference type="HAMAP-Rule" id="MF_00758"/>
    </source>
</evidence>
<dbReference type="EMBL" id="AJ749949">
    <property type="protein sequence ID" value="CAG45618.1"/>
    <property type="molecule type" value="Genomic_DNA"/>
</dbReference>
<dbReference type="RefSeq" id="WP_003021066.1">
    <property type="nucleotide sequence ID" value="NZ_CP010290.1"/>
</dbReference>
<dbReference type="RefSeq" id="YP_169973.1">
    <property type="nucleotide sequence ID" value="NC_006570.2"/>
</dbReference>
<dbReference type="SMR" id="Q5NG69"/>
<dbReference type="STRING" id="177416.FTT_0985"/>
<dbReference type="DNASU" id="3190893"/>
<dbReference type="EnsemblBacteria" id="CAG45618">
    <property type="protein sequence ID" value="CAG45618"/>
    <property type="gene ID" value="FTT_0985"/>
</dbReference>
<dbReference type="KEGG" id="ftu:FTT_0985"/>
<dbReference type="eggNOG" id="COG1678">
    <property type="taxonomic scope" value="Bacteria"/>
</dbReference>
<dbReference type="OrthoDB" id="9807486at2"/>
<dbReference type="Proteomes" id="UP000001174">
    <property type="component" value="Chromosome"/>
</dbReference>
<dbReference type="GO" id="GO:0005829">
    <property type="term" value="C:cytosol"/>
    <property type="evidence" value="ECO:0007669"/>
    <property type="project" value="TreeGrafter"/>
</dbReference>
<dbReference type="Gene3D" id="3.40.1740.10">
    <property type="entry name" value="VC0467-like"/>
    <property type="match status" value="1"/>
</dbReference>
<dbReference type="Gene3D" id="3.30.70.1300">
    <property type="entry name" value="VC0467-like domains"/>
    <property type="match status" value="1"/>
</dbReference>
<dbReference type="HAMAP" id="MF_00758">
    <property type="entry name" value="UPF0301"/>
    <property type="match status" value="1"/>
</dbReference>
<dbReference type="InterPro" id="IPR003774">
    <property type="entry name" value="AlgH-like"/>
</dbReference>
<dbReference type="PANTHER" id="PTHR30327">
    <property type="entry name" value="UNCHARACTERIZED PROTEIN YQGE"/>
    <property type="match status" value="1"/>
</dbReference>
<dbReference type="PANTHER" id="PTHR30327:SF1">
    <property type="entry name" value="UPF0301 PROTEIN YQGE"/>
    <property type="match status" value="1"/>
</dbReference>
<dbReference type="Pfam" id="PF02622">
    <property type="entry name" value="DUF179"/>
    <property type="match status" value="1"/>
</dbReference>
<dbReference type="SUPFAM" id="SSF143456">
    <property type="entry name" value="VC0467-like"/>
    <property type="match status" value="1"/>
</dbReference>
<accession>Q5NG69</accession>
<sequence>MYQNHKSEILLATPLIKDDIVFTKSVVYLCQNDRHGAMGLIINKPLADTLKDVFEELHIPHTNTFKEILEYPLYMGGPISPHKIMILHTTNGRNYTSTIKLDEGLAITASIDILEDIANNILPEYFLPVVGYSCWTANQLTDEIKSNDWIVTNKLNKKILFNHENKVKWQNHLEHAGYTLQSLDTLFNRNTGNC</sequence>
<organism>
    <name type="scientific">Francisella tularensis subsp. tularensis (strain SCHU S4 / Schu 4)</name>
    <dbReference type="NCBI Taxonomy" id="177416"/>
    <lineage>
        <taxon>Bacteria</taxon>
        <taxon>Pseudomonadati</taxon>
        <taxon>Pseudomonadota</taxon>
        <taxon>Gammaproteobacteria</taxon>
        <taxon>Thiotrichales</taxon>
        <taxon>Francisellaceae</taxon>
        <taxon>Francisella</taxon>
    </lineage>
</organism>
<protein>
    <recommendedName>
        <fullName evidence="1">UPF0301 protein FTT_0985</fullName>
    </recommendedName>
</protein>
<feature type="chain" id="PRO_0000258827" description="UPF0301 protein FTT_0985">
    <location>
        <begin position="1"/>
        <end position="194"/>
    </location>
</feature>
<proteinExistence type="inferred from homology"/>
<reference key="1">
    <citation type="journal article" date="2005" name="Nat. Genet.">
        <title>The complete genome sequence of Francisella tularensis, the causative agent of tularemia.</title>
        <authorList>
            <person name="Larsson P."/>
            <person name="Oyston P.C.F."/>
            <person name="Chain P."/>
            <person name="Chu M.C."/>
            <person name="Duffield M."/>
            <person name="Fuxelius H.-H."/>
            <person name="Garcia E."/>
            <person name="Haelltorp G."/>
            <person name="Johansson D."/>
            <person name="Isherwood K.E."/>
            <person name="Karp P.D."/>
            <person name="Larsson E."/>
            <person name="Liu Y."/>
            <person name="Michell S."/>
            <person name="Prior J."/>
            <person name="Prior R."/>
            <person name="Malfatti S."/>
            <person name="Sjoestedt A."/>
            <person name="Svensson K."/>
            <person name="Thompson N."/>
            <person name="Vergez L."/>
            <person name="Wagg J.K."/>
            <person name="Wren B.W."/>
            <person name="Lindler L.E."/>
            <person name="Andersson S.G.E."/>
            <person name="Forsman M."/>
            <person name="Titball R.W."/>
        </authorList>
    </citation>
    <scope>NUCLEOTIDE SEQUENCE [LARGE SCALE GENOMIC DNA]</scope>
    <source>
        <strain>SCHU S4 / Schu 4</strain>
    </source>
</reference>
<name>Y985_FRATT</name>